<reference key="1">
    <citation type="submission" date="2008-06" db="EMBL/GenBank/DDBJ databases">
        <title>Lactobacillus casei BL23 complete genome sequence.</title>
        <authorList>
            <person name="Maze A."/>
            <person name="Boel G."/>
            <person name="Bourand A."/>
            <person name="Loux V."/>
            <person name="Gibrat J.F."/>
            <person name="Zuniga M."/>
            <person name="Hartke A."/>
            <person name="Deutscher J."/>
        </authorList>
    </citation>
    <scope>NUCLEOTIDE SEQUENCE [LARGE SCALE GENOMIC DNA]</scope>
    <source>
        <strain>BL23</strain>
    </source>
</reference>
<name>YBEY_LACCB</name>
<evidence type="ECO:0000255" key="1">
    <source>
        <dbReference type="HAMAP-Rule" id="MF_00009"/>
    </source>
</evidence>
<keyword id="KW-0963">Cytoplasm</keyword>
<keyword id="KW-0255">Endonuclease</keyword>
<keyword id="KW-0378">Hydrolase</keyword>
<keyword id="KW-0479">Metal-binding</keyword>
<keyword id="KW-0540">Nuclease</keyword>
<keyword id="KW-0690">Ribosome biogenesis</keyword>
<keyword id="KW-0698">rRNA processing</keyword>
<keyword id="KW-0862">Zinc</keyword>
<gene>
    <name evidence="1" type="primary">ybeY</name>
    <name type="ordered locus">LCABL_17340</name>
</gene>
<feature type="chain" id="PRO_1000089186" description="Endoribonuclease YbeY">
    <location>
        <begin position="1"/>
        <end position="152"/>
    </location>
</feature>
<feature type="binding site" evidence="1">
    <location>
        <position position="118"/>
    </location>
    <ligand>
        <name>Zn(2+)</name>
        <dbReference type="ChEBI" id="CHEBI:29105"/>
        <note>catalytic</note>
    </ligand>
</feature>
<feature type="binding site" evidence="1">
    <location>
        <position position="122"/>
    </location>
    <ligand>
        <name>Zn(2+)</name>
        <dbReference type="ChEBI" id="CHEBI:29105"/>
        <note>catalytic</note>
    </ligand>
</feature>
<feature type="binding site" evidence="1">
    <location>
        <position position="128"/>
    </location>
    <ligand>
        <name>Zn(2+)</name>
        <dbReference type="ChEBI" id="CHEBI:29105"/>
        <note>catalytic</note>
    </ligand>
</feature>
<dbReference type="EC" id="3.1.-.-" evidence="1"/>
<dbReference type="EMBL" id="FM177140">
    <property type="protein sequence ID" value="CAQ66815.1"/>
    <property type="molecule type" value="Genomic_DNA"/>
</dbReference>
<dbReference type="SMR" id="B3WEL4"/>
<dbReference type="KEGG" id="lcb:LCABL_17340"/>
<dbReference type="HOGENOM" id="CLU_106710_3_0_9"/>
<dbReference type="GO" id="GO:0005737">
    <property type="term" value="C:cytoplasm"/>
    <property type="evidence" value="ECO:0007669"/>
    <property type="project" value="UniProtKB-SubCell"/>
</dbReference>
<dbReference type="GO" id="GO:0004222">
    <property type="term" value="F:metalloendopeptidase activity"/>
    <property type="evidence" value="ECO:0007669"/>
    <property type="project" value="InterPro"/>
</dbReference>
<dbReference type="GO" id="GO:0004521">
    <property type="term" value="F:RNA endonuclease activity"/>
    <property type="evidence" value="ECO:0007669"/>
    <property type="project" value="UniProtKB-UniRule"/>
</dbReference>
<dbReference type="GO" id="GO:0008270">
    <property type="term" value="F:zinc ion binding"/>
    <property type="evidence" value="ECO:0007669"/>
    <property type="project" value="UniProtKB-UniRule"/>
</dbReference>
<dbReference type="GO" id="GO:0006364">
    <property type="term" value="P:rRNA processing"/>
    <property type="evidence" value="ECO:0007669"/>
    <property type="project" value="UniProtKB-UniRule"/>
</dbReference>
<dbReference type="Gene3D" id="3.40.390.30">
    <property type="entry name" value="Metalloproteases ('zincins'), catalytic domain"/>
    <property type="match status" value="1"/>
</dbReference>
<dbReference type="HAMAP" id="MF_00009">
    <property type="entry name" value="Endoribonucl_YbeY"/>
    <property type="match status" value="1"/>
</dbReference>
<dbReference type="InterPro" id="IPR023091">
    <property type="entry name" value="MetalPrtase_cat_dom_sf_prd"/>
</dbReference>
<dbReference type="InterPro" id="IPR002036">
    <property type="entry name" value="YbeY"/>
</dbReference>
<dbReference type="InterPro" id="IPR020549">
    <property type="entry name" value="YbeY_CS"/>
</dbReference>
<dbReference type="NCBIfam" id="TIGR00043">
    <property type="entry name" value="rRNA maturation RNase YbeY"/>
    <property type="match status" value="1"/>
</dbReference>
<dbReference type="PANTHER" id="PTHR46986">
    <property type="entry name" value="ENDORIBONUCLEASE YBEY, CHLOROPLASTIC"/>
    <property type="match status" value="1"/>
</dbReference>
<dbReference type="PANTHER" id="PTHR46986:SF1">
    <property type="entry name" value="ENDORIBONUCLEASE YBEY, CHLOROPLASTIC"/>
    <property type="match status" value="1"/>
</dbReference>
<dbReference type="Pfam" id="PF02130">
    <property type="entry name" value="YbeY"/>
    <property type="match status" value="1"/>
</dbReference>
<dbReference type="SUPFAM" id="SSF55486">
    <property type="entry name" value="Metalloproteases ('zincins'), catalytic domain"/>
    <property type="match status" value="1"/>
</dbReference>
<dbReference type="PROSITE" id="PS01306">
    <property type="entry name" value="UPF0054"/>
    <property type="match status" value="1"/>
</dbReference>
<organism>
    <name type="scientific">Lacticaseibacillus casei (strain BL23)</name>
    <name type="common">Lactobacillus casei</name>
    <dbReference type="NCBI Taxonomy" id="543734"/>
    <lineage>
        <taxon>Bacteria</taxon>
        <taxon>Bacillati</taxon>
        <taxon>Bacillota</taxon>
        <taxon>Bacilli</taxon>
        <taxon>Lactobacillales</taxon>
        <taxon>Lactobacillaceae</taxon>
        <taxon>Lacticaseibacillus</taxon>
    </lineage>
</organism>
<accession>B3WEL4</accession>
<protein>
    <recommendedName>
        <fullName evidence="1">Endoribonuclease YbeY</fullName>
        <ecNumber evidence="1">3.1.-.-</ecNumber>
    </recommendedName>
</protein>
<sequence length="152" mass="17492">MDLELFDDDQLLDDKHHDLIKKLVAFCGKQLKLPENTEMSITLVGDDEIERINREYRETDRVTDVISFAIEEGEDDLPLLPGMAKNIGDLFIDPLTVRRHAEEYGHSFERELGYTVVHGFLHLNGYDHIKPEDEAVMIPLQKKILAAYGLTR</sequence>
<comment type="function">
    <text evidence="1">Single strand-specific metallo-endoribonuclease involved in late-stage 70S ribosome quality control and in maturation of the 3' terminus of the 16S rRNA.</text>
</comment>
<comment type="cofactor">
    <cofactor evidence="1">
        <name>Zn(2+)</name>
        <dbReference type="ChEBI" id="CHEBI:29105"/>
    </cofactor>
    <text evidence="1">Binds 1 zinc ion.</text>
</comment>
<comment type="subcellular location">
    <subcellularLocation>
        <location evidence="1">Cytoplasm</location>
    </subcellularLocation>
</comment>
<comment type="similarity">
    <text evidence="1">Belongs to the endoribonuclease YbeY family.</text>
</comment>
<proteinExistence type="inferred from homology"/>